<dbReference type="EMBL" id="EU311541">
    <property type="protein sequence ID" value="ACA09631.1"/>
    <property type="molecule type" value="mRNA"/>
</dbReference>
<dbReference type="GO" id="GO:0005576">
    <property type="term" value="C:extracellular region"/>
    <property type="evidence" value="ECO:0007669"/>
    <property type="project" value="UniProtKB-SubCell"/>
</dbReference>
<dbReference type="GO" id="GO:0042742">
    <property type="term" value="P:defense response to bacterium"/>
    <property type="evidence" value="ECO:0007669"/>
    <property type="project" value="UniProtKB-KW"/>
</dbReference>
<dbReference type="GO" id="GO:0045087">
    <property type="term" value="P:innate immune response"/>
    <property type="evidence" value="ECO:0007669"/>
    <property type="project" value="UniProtKB-KW"/>
</dbReference>
<dbReference type="InterPro" id="IPR004275">
    <property type="entry name" value="Frog_antimicrobial_propeptide"/>
</dbReference>
<dbReference type="Pfam" id="PF03032">
    <property type="entry name" value="FSAP_sig_propep"/>
    <property type="match status" value="1"/>
</dbReference>
<comment type="function">
    <text evidence="2">Antimicrobial peptide with activity against Gram-positive bacteria (PubMed:18312859). Has been tested against S.aureus (MIC=37.5 ug/mL), against B.pumilus (MIC=75.0 ug/mL), B.cereus (no activity detected) (PubMed:18312859). Does not show activity against Gram-negative bacteria (E.coli, B.dysenteriae, A.calcoaceticus, P.aeruginosa) and fungi (C.albicans) (PubMed:18312859). Does not show hemolytic activity against rabbit erythrocytes (PubMed:18312859).</text>
</comment>
<comment type="subcellular location">
    <subcellularLocation>
        <location evidence="5">Secreted</location>
    </subcellularLocation>
</comment>
<comment type="tissue specificity">
    <text evidence="5">Expressed by the skin glands.</text>
</comment>
<comment type="miscellaneous">
    <text evidence="2">Mainly adopts a combination conformation of random and beta-sheet.</text>
</comment>
<comment type="similarity">
    <text evidence="4">Belongs to the frog skin active peptide (FSAP) family. Amolopin subfamily.</text>
</comment>
<evidence type="ECO:0000255" key="1"/>
<evidence type="ECO:0000269" key="2">
    <source>
    </source>
</evidence>
<evidence type="ECO:0000303" key="3">
    <source>
    </source>
</evidence>
<evidence type="ECO:0000305" key="4"/>
<evidence type="ECO:0000305" key="5">
    <source>
    </source>
</evidence>
<evidence type="ECO:0000312" key="6">
    <source>
        <dbReference type="EMBL" id="ACA09631.1"/>
    </source>
</evidence>
<proteinExistence type="inferred from homology"/>
<protein>
    <recommendedName>
        <fullName evidence="3 6">Amolopin-P2</fullName>
    </recommendedName>
</protein>
<name>AMO2_AMOLO</name>
<organism>
    <name type="scientific">Amolops loloensis</name>
    <name type="common">Lolokou Sucker Frog</name>
    <name type="synonym">Staurois loloensis</name>
    <dbReference type="NCBI Taxonomy" id="318551"/>
    <lineage>
        <taxon>Eukaryota</taxon>
        <taxon>Metazoa</taxon>
        <taxon>Chordata</taxon>
        <taxon>Craniata</taxon>
        <taxon>Vertebrata</taxon>
        <taxon>Euteleostomi</taxon>
        <taxon>Amphibia</taxon>
        <taxon>Batrachia</taxon>
        <taxon>Anura</taxon>
        <taxon>Neobatrachia</taxon>
        <taxon>Ranoidea</taxon>
        <taxon>Ranidae</taxon>
        <taxon>Amolops</taxon>
    </lineage>
</organism>
<keyword id="KW-0878">Amphibian defense peptide</keyword>
<keyword id="KW-0044">Antibiotic</keyword>
<keyword id="KW-0929">Antimicrobial</keyword>
<keyword id="KW-0165">Cleavage on pair of basic residues</keyword>
<keyword id="KW-0391">Immunity</keyword>
<keyword id="KW-0399">Innate immunity</keyword>
<keyword id="KW-0964">Secreted</keyword>
<keyword id="KW-0732">Signal</keyword>
<sequence length="62" mass="6838">MFTLKKSLLLLFFLGTISLSLCEQERGADEEENGGEVTEQEVKRNVLSSVANGINRALSFFG</sequence>
<reference key="1">
    <citation type="journal article" date="2008" name="Biochimie">
        <title>A novel family of antimicrobial peptides from the skin of Amolops loloensis.</title>
        <authorList>
            <person name="Wang A."/>
            <person name="Wang J."/>
            <person name="Hong J."/>
            <person name="Feng H."/>
            <person name="Yang H."/>
            <person name="Yu X."/>
            <person name="Ma Y."/>
            <person name="Lai R."/>
        </authorList>
    </citation>
    <scope>NUCLEOTIDE SEQUENCE [MRNA]</scope>
    <scope>FUNCTION</scope>
    <scope>SYNTHESIS OF 45-62</scope>
    <source>
        <tissue>Skin</tissue>
    </source>
</reference>
<feature type="signal peptide" evidence="1">
    <location>
        <begin position="1"/>
        <end position="22"/>
    </location>
</feature>
<feature type="propeptide" id="PRO_0000450013" evidence="5">
    <location>
        <begin position="23"/>
        <end position="44"/>
    </location>
</feature>
<feature type="peptide" id="PRO_5002952197" description="Amolopin-P2" evidence="5">
    <location>
        <begin position="45"/>
        <end position="62"/>
    </location>
</feature>
<accession>C5H0C8</accession>